<organism>
    <name type="scientific">Phlyctimantis maculatus</name>
    <name type="common">Red-legged running frog</name>
    <name type="synonym">Hylambates maculatus</name>
    <dbReference type="NCBI Taxonomy" id="2517390"/>
    <lineage>
        <taxon>Eukaryota</taxon>
        <taxon>Metazoa</taxon>
        <taxon>Chordata</taxon>
        <taxon>Craniata</taxon>
        <taxon>Vertebrata</taxon>
        <taxon>Euteleostomi</taxon>
        <taxon>Amphibia</taxon>
        <taxon>Batrachia</taxon>
        <taxon>Anura</taxon>
        <taxon>Neobatrachia</taxon>
        <taxon>Microhyloidea</taxon>
        <taxon>Hyperoliidae</taxon>
        <taxon>Kassina</taxon>
    </lineage>
</organism>
<proteinExistence type="evidence at protein level"/>
<keyword id="KW-0027">Amidation</keyword>
<keyword id="KW-0878">Amphibian defense peptide</keyword>
<keyword id="KW-0903">Direct protein sequencing</keyword>
<keyword id="KW-0527">Neuropeptide</keyword>
<keyword id="KW-0964">Secreted</keyword>
<feature type="peptide" id="PRO_0000044396" description="Hylambatin">
    <location>
        <begin position="1"/>
        <end position="12"/>
    </location>
</feature>
<feature type="modified residue" description="Methionine amide" evidence="1">
    <location>
        <position position="12"/>
    </location>
</feature>
<evidence type="ECO:0000269" key="1">
    <source ref="1"/>
</evidence>
<evidence type="ECO:0000305" key="2"/>
<dbReference type="PIR" id="S07436">
    <property type="entry name" value="S07436"/>
</dbReference>
<dbReference type="GO" id="GO:0005576">
    <property type="term" value="C:extracellular region"/>
    <property type="evidence" value="ECO:0007669"/>
    <property type="project" value="UniProtKB-SubCell"/>
</dbReference>
<dbReference type="GO" id="GO:0006952">
    <property type="term" value="P:defense response"/>
    <property type="evidence" value="ECO:0007669"/>
    <property type="project" value="UniProtKB-KW"/>
</dbReference>
<dbReference type="GO" id="GO:0007218">
    <property type="term" value="P:neuropeptide signaling pathway"/>
    <property type="evidence" value="ECO:0007669"/>
    <property type="project" value="UniProtKB-KW"/>
</dbReference>
<dbReference type="InterPro" id="IPR013055">
    <property type="entry name" value="Tachy_Neuro_lke_CS"/>
</dbReference>
<dbReference type="PROSITE" id="PS00267">
    <property type="entry name" value="TACHYKININ"/>
    <property type="match status" value="1"/>
</dbReference>
<protein>
    <recommendedName>
        <fullName>Hylambatin</fullName>
    </recommendedName>
</protein>
<reference key="1">
    <citation type="journal article" date="1981" name="Biomed. Res.">
        <title>New tachykinins, Glu2, Pro5-kassinin (hylambates-kassinin) and hylambatin, in the skin of the African rhacophorid frog Hylambates maculatus.</title>
        <authorList>
            <person name="Yasuhara T."/>
            <person name="Nakajima T."/>
            <person name="Erspamer G.F."/>
            <person name="Erspamer V."/>
        </authorList>
    </citation>
    <scope>PROTEIN SEQUENCE</scope>
    <scope>AMIDATION AT MET-12</scope>
    <source>
        <tissue>Skin secretion</tissue>
    </source>
</reference>
<accession>P08614</accession>
<comment type="function">
    <text>Tachykinins are active peptides which excite neurons, evoke behavioral responses, are potent vasodilators and secretagogues, and contract (directly or indirectly) many smooth muscles.</text>
</comment>
<comment type="subcellular location">
    <subcellularLocation>
        <location>Secreted</location>
    </subcellularLocation>
</comment>
<comment type="tissue specificity">
    <text>Expressed by the skin glands.</text>
</comment>
<comment type="similarity">
    <text evidence="2">Belongs to the tachykinin family.</text>
</comment>
<name>TKN2_PHLMA</name>
<sequence length="12" mass="1441">DPPDPDRFYGMM</sequence>